<feature type="chain" id="PRO_0000197499" description="Glutathione synthetase">
    <location>
        <begin position="1"/>
        <end position="314"/>
    </location>
</feature>
<feature type="domain" description="ATP-grasp" evidence="2">
    <location>
        <begin position="125"/>
        <end position="311"/>
    </location>
</feature>
<feature type="binding site" evidence="2">
    <location>
        <begin position="151"/>
        <end position="208"/>
    </location>
    <ligand>
        <name>ATP</name>
        <dbReference type="ChEBI" id="CHEBI:30616"/>
    </ligand>
</feature>
<feature type="binding site" evidence="2">
    <location>
        <position position="282"/>
    </location>
    <ligand>
        <name>Mg(2+)</name>
        <dbReference type="ChEBI" id="CHEBI:18420"/>
    </ligand>
</feature>
<feature type="binding site" evidence="2">
    <location>
        <position position="284"/>
    </location>
    <ligand>
        <name>Mg(2+)</name>
        <dbReference type="ChEBI" id="CHEBI:18420"/>
    </ligand>
</feature>
<evidence type="ECO:0000250" key="1"/>
<evidence type="ECO:0000255" key="2">
    <source>
        <dbReference type="HAMAP-Rule" id="MF_00162"/>
    </source>
</evidence>
<proteinExistence type="inferred from homology"/>
<organism>
    <name type="scientific">Xylella fastidiosa (strain Temecula1 / ATCC 700964)</name>
    <dbReference type="NCBI Taxonomy" id="183190"/>
    <lineage>
        <taxon>Bacteria</taxon>
        <taxon>Pseudomonadati</taxon>
        <taxon>Pseudomonadota</taxon>
        <taxon>Gammaproteobacteria</taxon>
        <taxon>Lysobacterales</taxon>
        <taxon>Lysobacteraceae</taxon>
        <taxon>Xylella</taxon>
    </lineage>
</organism>
<name>GSHB_XYLFT</name>
<sequence length="314" mass="34735">MPLDVVVVMDPITGIKIAKDTTFALLLEAQRRSHRLHYVHPGSLSLNEGRTFAQTAPLQVRDNKTDWYTLGEFSETQLGQGQIILMRKDPPVNAEFIYDTQLLSIAQAAGAQVINHPQGLRDLNEKIAAQLFPQCCPPTLISRDMRALKMFVQKQEQAILKPLDGMGGHSIFRSSNGDPNLNVILETLTDGGRTLAIAQRYLQQIIEGDKRILLIDGVPIDHCLARIPQGDEFRGNMAAGGRGESRPLNERDRWIAAQVGPEMRRRGMRFVGIDVIGDYLTEINVTSPTCLRELDAQCGLNIAGQLFDAIETGG</sequence>
<comment type="catalytic activity">
    <reaction evidence="2">
        <text>gamma-L-glutamyl-L-cysteine + glycine + ATP = glutathione + ADP + phosphate + H(+)</text>
        <dbReference type="Rhea" id="RHEA:13557"/>
        <dbReference type="ChEBI" id="CHEBI:15378"/>
        <dbReference type="ChEBI" id="CHEBI:30616"/>
        <dbReference type="ChEBI" id="CHEBI:43474"/>
        <dbReference type="ChEBI" id="CHEBI:57305"/>
        <dbReference type="ChEBI" id="CHEBI:57925"/>
        <dbReference type="ChEBI" id="CHEBI:58173"/>
        <dbReference type="ChEBI" id="CHEBI:456216"/>
        <dbReference type="EC" id="6.3.2.3"/>
    </reaction>
</comment>
<comment type="cofactor">
    <cofactor evidence="1">
        <name>Mg(2+)</name>
        <dbReference type="ChEBI" id="CHEBI:18420"/>
    </cofactor>
    <cofactor evidence="1">
        <name>Mn(2+)</name>
        <dbReference type="ChEBI" id="CHEBI:29035"/>
    </cofactor>
    <text evidence="1">Binds 1 Mg(2+) or Mn(2+) ion per subunit.</text>
</comment>
<comment type="pathway">
    <text evidence="2">Sulfur metabolism; glutathione biosynthesis; glutathione from L-cysteine and L-glutamate: step 2/2.</text>
</comment>
<comment type="similarity">
    <text evidence="2">Belongs to the prokaryotic GSH synthase family.</text>
</comment>
<dbReference type="EC" id="6.3.2.3" evidence="2"/>
<dbReference type="EMBL" id="AE009442">
    <property type="protein sequence ID" value="AAO28712.1"/>
    <property type="molecule type" value="Genomic_DNA"/>
</dbReference>
<dbReference type="RefSeq" id="WP_004572847.1">
    <property type="nucleotide sequence ID" value="NC_004556.1"/>
</dbReference>
<dbReference type="SMR" id="Q87D42"/>
<dbReference type="GeneID" id="93904630"/>
<dbReference type="KEGG" id="xft:PD_0844"/>
<dbReference type="HOGENOM" id="CLU_068239_0_0_6"/>
<dbReference type="UniPathway" id="UPA00142">
    <property type="reaction ID" value="UER00210"/>
</dbReference>
<dbReference type="Proteomes" id="UP000002516">
    <property type="component" value="Chromosome"/>
</dbReference>
<dbReference type="GO" id="GO:0005737">
    <property type="term" value="C:cytoplasm"/>
    <property type="evidence" value="ECO:0007669"/>
    <property type="project" value="TreeGrafter"/>
</dbReference>
<dbReference type="GO" id="GO:0005524">
    <property type="term" value="F:ATP binding"/>
    <property type="evidence" value="ECO:0007669"/>
    <property type="project" value="UniProtKB-UniRule"/>
</dbReference>
<dbReference type="GO" id="GO:0004363">
    <property type="term" value="F:glutathione synthase activity"/>
    <property type="evidence" value="ECO:0007669"/>
    <property type="project" value="UniProtKB-UniRule"/>
</dbReference>
<dbReference type="GO" id="GO:0046872">
    <property type="term" value="F:metal ion binding"/>
    <property type="evidence" value="ECO:0007669"/>
    <property type="project" value="UniProtKB-KW"/>
</dbReference>
<dbReference type="FunFam" id="3.30.1490.20:FF:000009">
    <property type="entry name" value="Glutathione synthetase"/>
    <property type="match status" value="1"/>
</dbReference>
<dbReference type="FunFam" id="3.40.50.20:FF:000009">
    <property type="entry name" value="Glutathione synthetase"/>
    <property type="match status" value="1"/>
</dbReference>
<dbReference type="Gene3D" id="3.40.50.20">
    <property type="match status" value="1"/>
</dbReference>
<dbReference type="Gene3D" id="3.30.1490.20">
    <property type="entry name" value="ATP-grasp fold, A domain"/>
    <property type="match status" value="1"/>
</dbReference>
<dbReference type="Gene3D" id="3.30.470.20">
    <property type="entry name" value="ATP-grasp fold, B domain"/>
    <property type="match status" value="1"/>
</dbReference>
<dbReference type="HAMAP" id="MF_00162">
    <property type="entry name" value="GSH_S"/>
    <property type="match status" value="1"/>
</dbReference>
<dbReference type="InterPro" id="IPR011761">
    <property type="entry name" value="ATP-grasp"/>
</dbReference>
<dbReference type="InterPro" id="IPR013815">
    <property type="entry name" value="ATP_grasp_subdomain_1"/>
</dbReference>
<dbReference type="InterPro" id="IPR006284">
    <property type="entry name" value="Glut_synth_pro"/>
</dbReference>
<dbReference type="InterPro" id="IPR004218">
    <property type="entry name" value="GSHS_ATP-bd"/>
</dbReference>
<dbReference type="InterPro" id="IPR004215">
    <property type="entry name" value="GSHS_N"/>
</dbReference>
<dbReference type="InterPro" id="IPR016185">
    <property type="entry name" value="PreATP-grasp_dom_sf"/>
</dbReference>
<dbReference type="NCBIfam" id="TIGR01380">
    <property type="entry name" value="glut_syn"/>
    <property type="match status" value="1"/>
</dbReference>
<dbReference type="NCBIfam" id="NF003573">
    <property type="entry name" value="PRK05246.1"/>
    <property type="match status" value="1"/>
</dbReference>
<dbReference type="PANTHER" id="PTHR21621:SF4">
    <property type="entry name" value="GLUTATHIONE SYNTHETASE"/>
    <property type="match status" value="1"/>
</dbReference>
<dbReference type="PANTHER" id="PTHR21621">
    <property type="entry name" value="RIBOSOMAL PROTEIN S6 MODIFICATION PROTEIN"/>
    <property type="match status" value="1"/>
</dbReference>
<dbReference type="Pfam" id="PF02955">
    <property type="entry name" value="GSH-S_ATP"/>
    <property type="match status" value="1"/>
</dbReference>
<dbReference type="Pfam" id="PF02951">
    <property type="entry name" value="GSH-S_N"/>
    <property type="match status" value="1"/>
</dbReference>
<dbReference type="SUPFAM" id="SSF56059">
    <property type="entry name" value="Glutathione synthetase ATP-binding domain-like"/>
    <property type="match status" value="1"/>
</dbReference>
<dbReference type="SUPFAM" id="SSF52440">
    <property type="entry name" value="PreATP-grasp domain"/>
    <property type="match status" value="1"/>
</dbReference>
<dbReference type="PROSITE" id="PS50975">
    <property type="entry name" value="ATP_GRASP"/>
    <property type="match status" value="1"/>
</dbReference>
<gene>
    <name evidence="2" type="primary">gshB</name>
    <name type="ordered locus">PD_0844</name>
</gene>
<keyword id="KW-0067">ATP-binding</keyword>
<keyword id="KW-0317">Glutathione biosynthesis</keyword>
<keyword id="KW-0436">Ligase</keyword>
<keyword id="KW-0460">Magnesium</keyword>
<keyword id="KW-0464">Manganese</keyword>
<keyword id="KW-0479">Metal-binding</keyword>
<keyword id="KW-0547">Nucleotide-binding</keyword>
<keyword id="KW-1185">Reference proteome</keyword>
<reference key="1">
    <citation type="journal article" date="2003" name="J. Bacteriol.">
        <title>Comparative analyses of the complete genome sequences of Pierce's disease and citrus variegated chlorosis strains of Xylella fastidiosa.</title>
        <authorList>
            <person name="Van Sluys M.A."/>
            <person name="de Oliveira M.C."/>
            <person name="Monteiro-Vitorello C.B."/>
            <person name="Miyaki C.Y."/>
            <person name="Furlan L.R."/>
            <person name="Camargo L.E.A."/>
            <person name="da Silva A.C.R."/>
            <person name="Moon D.H."/>
            <person name="Takita M.A."/>
            <person name="Lemos E.G.M."/>
            <person name="Machado M.A."/>
            <person name="Ferro M.I.T."/>
            <person name="da Silva F.R."/>
            <person name="Goldman M.H.S."/>
            <person name="Goldman G.H."/>
            <person name="Lemos M.V.F."/>
            <person name="El-Dorry H."/>
            <person name="Tsai S.M."/>
            <person name="Carrer H."/>
            <person name="Carraro D.M."/>
            <person name="de Oliveira R.C."/>
            <person name="Nunes L.R."/>
            <person name="Siqueira W.J."/>
            <person name="Coutinho L.L."/>
            <person name="Kimura E.T."/>
            <person name="Ferro E.S."/>
            <person name="Harakava R."/>
            <person name="Kuramae E.E."/>
            <person name="Marino C.L."/>
            <person name="Giglioti E."/>
            <person name="Abreu I.L."/>
            <person name="Alves L.M.C."/>
            <person name="do Amaral A.M."/>
            <person name="Baia G.S."/>
            <person name="Blanco S.R."/>
            <person name="Brito M.S."/>
            <person name="Cannavan F.S."/>
            <person name="Celestino A.V."/>
            <person name="da Cunha A.F."/>
            <person name="Fenille R.C."/>
            <person name="Ferro J.A."/>
            <person name="Formighieri E.F."/>
            <person name="Kishi L.T."/>
            <person name="Leoni S.G."/>
            <person name="Oliveira A.R."/>
            <person name="Rosa V.E. Jr."/>
            <person name="Sassaki F.T."/>
            <person name="Sena J.A.D."/>
            <person name="de Souza A.A."/>
            <person name="Truffi D."/>
            <person name="Tsukumo F."/>
            <person name="Yanai G.M."/>
            <person name="Zaros L.G."/>
            <person name="Civerolo E.L."/>
            <person name="Simpson A.J.G."/>
            <person name="Almeida N.F. Jr."/>
            <person name="Setubal J.C."/>
            <person name="Kitajima J.P."/>
        </authorList>
    </citation>
    <scope>NUCLEOTIDE SEQUENCE [LARGE SCALE GENOMIC DNA]</scope>
    <source>
        <strain>Temecula1 / ATCC 700964</strain>
    </source>
</reference>
<accession>Q87D42</accession>
<protein>
    <recommendedName>
        <fullName evidence="2">Glutathione synthetase</fullName>
        <ecNumber evidence="2">6.3.2.3</ecNumber>
    </recommendedName>
    <alternativeName>
        <fullName evidence="2">GSH synthetase</fullName>
        <shortName evidence="2">GSH-S</shortName>
        <shortName evidence="2">GSHase</shortName>
    </alternativeName>
    <alternativeName>
        <fullName evidence="2">Glutathione synthase</fullName>
    </alternativeName>
</protein>